<gene>
    <name type="primary">SYT1</name>
    <name type="ordered locus">YPR095C</name>
    <name type="ORF">P9513.17</name>
</gene>
<organism>
    <name type="scientific">Saccharomyces cerevisiae (strain ATCC 204508 / S288c)</name>
    <name type="common">Baker's yeast</name>
    <dbReference type="NCBI Taxonomy" id="559292"/>
    <lineage>
        <taxon>Eukaryota</taxon>
        <taxon>Fungi</taxon>
        <taxon>Dikarya</taxon>
        <taxon>Ascomycota</taxon>
        <taxon>Saccharomycotina</taxon>
        <taxon>Saccharomycetes</taxon>
        <taxon>Saccharomycetales</taxon>
        <taxon>Saccharomycetaceae</taxon>
        <taxon>Saccharomyces</taxon>
    </lineage>
</organism>
<dbReference type="EMBL" id="U51033">
    <property type="protein sequence ID" value="AAB68141.1"/>
    <property type="molecule type" value="Genomic_DNA"/>
</dbReference>
<dbReference type="EMBL" id="BK006949">
    <property type="protein sequence ID" value="DAA11510.1"/>
    <property type="molecule type" value="Genomic_DNA"/>
</dbReference>
<dbReference type="PIR" id="S69078">
    <property type="entry name" value="S69078"/>
</dbReference>
<dbReference type="RefSeq" id="NP_015420.1">
    <property type="nucleotide sequence ID" value="NM_001184192.1"/>
</dbReference>
<dbReference type="SMR" id="Q06836"/>
<dbReference type="BioGRID" id="36263">
    <property type="interactions" value="151"/>
</dbReference>
<dbReference type="FunCoup" id="Q06836">
    <property type="interactions" value="38"/>
</dbReference>
<dbReference type="IntAct" id="Q06836">
    <property type="interactions" value="4"/>
</dbReference>
<dbReference type="MINT" id="Q06836"/>
<dbReference type="STRING" id="4932.YPR095C"/>
<dbReference type="GlyGen" id="Q06836">
    <property type="glycosylation" value="4 sites, 1 O-linked glycan (3 sites)"/>
</dbReference>
<dbReference type="iPTMnet" id="Q06836"/>
<dbReference type="PaxDb" id="4932-YPR095C"/>
<dbReference type="PeptideAtlas" id="Q06836"/>
<dbReference type="EnsemblFungi" id="YPR095C_mRNA">
    <property type="protein sequence ID" value="YPR095C"/>
    <property type="gene ID" value="YPR095C"/>
</dbReference>
<dbReference type="GeneID" id="856210"/>
<dbReference type="KEGG" id="sce:YPR095C"/>
<dbReference type="AGR" id="SGD:S000006299"/>
<dbReference type="SGD" id="S000006299">
    <property type="gene designation" value="SYT1"/>
</dbReference>
<dbReference type="VEuPathDB" id="FungiDB:YPR095C"/>
<dbReference type="eggNOG" id="KOG0929">
    <property type="taxonomic scope" value="Eukaryota"/>
</dbReference>
<dbReference type="HOGENOM" id="CLU_008280_0_0_1"/>
<dbReference type="InParanoid" id="Q06836"/>
<dbReference type="OMA" id="ANTICNK"/>
<dbReference type="OrthoDB" id="430364at2759"/>
<dbReference type="BioCyc" id="YEAST:G3O-34236-MONOMER"/>
<dbReference type="BioGRID-ORCS" id="856210">
    <property type="hits" value="4 hits in 10 CRISPR screens"/>
</dbReference>
<dbReference type="CD-CODE" id="E03F929F">
    <property type="entry name" value="Stress granule"/>
</dbReference>
<dbReference type="PRO" id="PR:Q06836"/>
<dbReference type="Proteomes" id="UP000002311">
    <property type="component" value="Chromosome XVI"/>
</dbReference>
<dbReference type="RNAct" id="Q06836">
    <property type="molecule type" value="protein"/>
</dbReference>
<dbReference type="GO" id="GO:0000139">
    <property type="term" value="C:Golgi membrane"/>
    <property type="evidence" value="ECO:0000314"/>
    <property type="project" value="SGD"/>
</dbReference>
<dbReference type="GO" id="GO:0005739">
    <property type="term" value="C:mitochondrion"/>
    <property type="evidence" value="ECO:0007005"/>
    <property type="project" value="SGD"/>
</dbReference>
<dbReference type="GO" id="GO:0005085">
    <property type="term" value="F:guanyl-nucleotide exchange factor activity"/>
    <property type="evidence" value="ECO:0000314"/>
    <property type="project" value="SGD"/>
</dbReference>
<dbReference type="GO" id="GO:0006887">
    <property type="term" value="P:exocytosis"/>
    <property type="evidence" value="ECO:0000316"/>
    <property type="project" value="SGD"/>
</dbReference>
<dbReference type="GO" id="GO:0032014">
    <property type="term" value="P:positive regulation of ARF protein signal transduction"/>
    <property type="evidence" value="ECO:0000314"/>
    <property type="project" value="SGD"/>
</dbReference>
<dbReference type="GO" id="GO:0034067">
    <property type="term" value="P:protein localization to Golgi apparatus"/>
    <property type="evidence" value="ECO:0000315"/>
    <property type="project" value="SGD"/>
</dbReference>
<dbReference type="GO" id="GO:0034976">
    <property type="term" value="P:response to endoplasmic reticulum stress"/>
    <property type="evidence" value="ECO:0000315"/>
    <property type="project" value="SGD"/>
</dbReference>
<dbReference type="GO" id="GO:0016192">
    <property type="term" value="P:vesicle-mediated transport"/>
    <property type="evidence" value="ECO:0000315"/>
    <property type="project" value="SGD"/>
</dbReference>
<dbReference type="CDD" id="cd00171">
    <property type="entry name" value="Sec7"/>
    <property type="match status" value="1"/>
</dbReference>
<dbReference type="Gene3D" id="1.10.1000.11">
    <property type="entry name" value="Arf Nucleotide-binding Site Opener,domain 2"/>
    <property type="match status" value="1"/>
</dbReference>
<dbReference type="InterPro" id="IPR001849">
    <property type="entry name" value="PH_domain"/>
</dbReference>
<dbReference type="InterPro" id="IPR023394">
    <property type="entry name" value="Sec7_C_sf"/>
</dbReference>
<dbReference type="InterPro" id="IPR000904">
    <property type="entry name" value="Sec7_dom"/>
</dbReference>
<dbReference type="InterPro" id="IPR035999">
    <property type="entry name" value="Sec7_dom_sf"/>
</dbReference>
<dbReference type="PANTHER" id="PTHR10663:SF405">
    <property type="entry name" value="ARF GUANINE NUCLEOTIDE EXCHANGE FACTOR SYT1"/>
    <property type="match status" value="1"/>
</dbReference>
<dbReference type="PANTHER" id="PTHR10663">
    <property type="entry name" value="GUANYL-NUCLEOTIDE EXCHANGE FACTOR"/>
    <property type="match status" value="1"/>
</dbReference>
<dbReference type="Pfam" id="PF01369">
    <property type="entry name" value="Sec7"/>
    <property type="match status" value="1"/>
</dbReference>
<dbReference type="SMART" id="SM00233">
    <property type="entry name" value="PH"/>
    <property type="match status" value="1"/>
</dbReference>
<dbReference type="SMART" id="SM00222">
    <property type="entry name" value="Sec7"/>
    <property type="match status" value="1"/>
</dbReference>
<dbReference type="SUPFAM" id="SSF48425">
    <property type="entry name" value="Sec7 domain"/>
    <property type="match status" value="1"/>
</dbReference>
<dbReference type="PROSITE" id="PS50190">
    <property type="entry name" value="SEC7"/>
    <property type="match status" value="1"/>
</dbReference>
<comment type="function">
    <text evidence="3">Guanine nucleotide exchange factor for Arf GTPases, stimulating the nucleotide exchange from the GDP-bound to the GTP-bound form. Catalyzes both the GDP release by and the GTP binding to ARF2. Has no exchange activity on Rab GTPases. Involved in vesicular transport.</text>
</comment>
<comment type="activity regulation">
    <text>Inhibited by brefeldin A.</text>
</comment>
<comment type="subcellular location">
    <subcellularLocation>
        <location evidence="5">Cytoplasm</location>
    </subcellularLocation>
</comment>
<comment type="domain">
    <text>The SEC7 domain is sufficient for nucleotide exchange activity.</text>
</comment>
<comment type="miscellaneous">
    <text evidence="4">Present with 279 molecules/cell in log phase SD medium.</text>
</comment>
<proteinExistence type="evidence at protein level"/>
<reference key="1">
    <citation type="journal article" date="1997" name="Nature">
        <title>The nucleotide sequence of Saccharomyces cerevisiae chromosome XVI.</title>
        <authorList>
            <person name="Bussey H."/>
            <person name="Storms R.K."/>
            <person name="Ahmed A."/>
            <person name="Albermann K."/>
            <person name="Allen E."/>
            <person name="Ansorge W."/>
            <person name="Araujo R."/>
            <person name="Aparicio A."/>
            <person name="Barrell B.G."/>
            <person name="Badcock K."/>
            <person name="Benes V."/>
            <person name="Botstein D."/>
            <person name="Bowman S."/>
            <person name="Brueckner M."/>
            <person name="Carpenter J."/>
            <person name="Cherry J.M."/>
            <person name="Chung E."/>
            <person name="Churcher C.M."/>
            <person name="Coster F."/>
            <person name="Davis K."/>
            <person name="Davis R.W."/>
            <person name="Dietrich F.S."/>
            <person name="Delius H."/>
            <person name="DiPaolo T."/>
            <person name="Dubois E."/>
            <person name="Duesterhoeft A."/>
            <person name="Duncan M."/>
            <person name="Floeth M."/>
            <person name="Fortin N."/>
            <person name="Friesen J.D."/>
            <person name="Fritz C."/>
            <person name="Goffeau A."/>
            <person name="Hall J."/>
            <person name="Hebling U."/>
            <person name="Heumann K."/>
            <person name="Hilbert H."/>
            <person name="Hillier L.W."/>
            <person name="Hunicke-Smith S."/>
            <person name="Hyman R.W."/>
            <person name="Johnston M."/>
            <person name="Kalman S."/>
            <person name="Kleine K."/>
            <person name="Komp C."/>
            <person name="Kurdi O."/>
            <person name="Lashkari D."/>
            <person name="Lew H."/>
            <person name="Lin A."/>
            <person name="Lin D."/>
            <person name="Louis E.J."/>
            <person name="Marathe R."/>
            <person name="Messenguy F."/>
            <person name="Mewes H.-W."/>
            <person name="Mirtipati S."/>
            <person name="Moestl D."/>
            <person name="Mueller-Auer S."/>
            <person name="Namath A."/>
            <person name="Nentwich U."/>
            <person name="Oefner P."/>
            <person name="Pearson D."/>
            <person name="Petel F.X."/>
            <person name="Pohl T.M."/>
            <person name="Purnelle B."/>
            <person name="Rajandream M.A."/>
            <person name="Rechmann S."/>
            <person name="Rieger M."/>
            <person name="Riles L."/>
            <person name="Roberts D."/>
            <person name="Schaefer M."/>
            <person name="Scharfe M."/>
            <person name="Scherens B."/>
            <person name="Schramm S."/>
            <person name="Schroeder M."/>
            <person name="Sdicu A.-M."/>
            <person name="Tettelin H."/>
            <person name="Urrestarazu L.A."/>
            <person name="Ushinsky S."/>
            <person name="Vierendeels F."/>
            <person name="Vissers S."/>
            <person name="Voss H."/>
            <person name="Walsh S.V."/>
            <person name="Wambutt R."/>
            <person name="Wang Y."/>
            <person name="Wedler E."/>
            <person name="Wedler H."/>
            <person name="Winnett E."/>
            <person name="Zhong W.-W."/>
            <person name="Zollner A."/>
            <person name="Vo D.H."/>
            <person name="Hani J."/>
        </authorList>
    </citation>
    <scope>NUCLEOTIDE SEQUENCE [LARGE SCALE GENOMIC DNA]</scope>
    <source>
        <strain>ATCC 204508 / S288c</strain>
    </source>
</reference>
<reference key="2">
    <citation type="journal article" date="2014" name="G3 (Bethesda)">
        <title>The reference genome sequence of Saccharomyces cerevisiae: Then and now.</title>
        <authorList>
            <person name="Engel S.R."/>
            <person name="Dietrich F.S."/>
            <person name="Fisk D.G."/>
            <person name="Binkley G."/>
            <person name="Balakrishnan R."/>
            <person name="Costanzo M.C."/>
            <person name="Dwight S.S."/>
            <person name="Hitz B.C."/>
            <person name="Karra K."/>
            <person name="Nash R.S."/>
            <person name="Weng S."/>
            <person name="Wong E.D."/>
            <person name="Lloyd P."/>
            <person name="Skrzypek M.S."/>
            <person name="Miyasato S.R."/>
            <person name="Simison M."/>
            <person name="Cherry J.M."/>
        </authorList>
    </citation>
    <scope>GENOME REANNOTATION</scope>
    <source>
        <strain>ATCC 204508 / S288c</strain>
    </source>
</reference>
<reference key="3">
    <citation type="journal article" date="1999" name="Genetics">
        <title>Genetic interactions in yeast between Ypt GTPases and Arf guanine nucleotide exchangers.</title>
        <authorList>
            <person name="Jones S."/>
            <person name="Jedd G."/>
            <person name="Kahn R.A."/>
            <person name="Franzusoff A."/>
            <person name="Bartolini F."/>
            <person name="Segev N."/>
        </authorList>
    </citation>
    <scope>FUNCTION</scope>
</reference>
<reference key="4">
    <citation type="journal article" date="2003" name="Nature">
        <title>Global analysis of protein expression in yeast.</title>
        <authorList>
            <person name="Ghaemmaghami S."/>
            <person name="Huh W.-K."/>
            <person name="Bower K."/>
            <person name="Howson R.W."/>
            <person name="Belle A."/>
            <person name="Dephoure N."/>
            <person name="O'Shea E.K."/>
            <person name="Weissman J.S."/>
        </authorList>
    </citation>
    <scope>LEVEL OF PROTEIN EXPRESSION [LARGE SCALE ANALYSIS]</scope>
</reference>
<reference key="5">
    <citation type="journal article" date="2004" name="Mol. Cell">
        <title>Genome-wide analysis of membrane targeting by S.cerevisiae pleckstrin homology domains.</title>
        <authorList>
            <person name="Yu J.W."/>
            <person name="Mendrola J.M."/>
            <person name="Audhya A."/>
            <person name="Singh S."/>
            <person name="Keleti D."/>
            <person name="DeWald D.B."/>
            <person name="Murray D."/>
            <person name="Emr S.D."/>
            <person name="Lemmon M.A."/>
        </authorList>
    </citation>
    <scope>SUBCELLULAR LOCATION</scope>
</reference>
<reference key="6">
    <citation type="journal article" date="2007" name="J. Proteome Res.">
        <title>Large-scale phosphorylation analysis of alpha-factor-arrested Saccharomyces cerevisiae.</title>
        <authorList>
            <person name="Li X."/>
            <person name="Gerber S.A."/>
            <person name="Rudner A.D."/>
            <person name="Beausoleil S.A."/>
            <person name="Haas W."/>
            <person name="Villen J."/>
            <person name="Elias J.E."/>
            <person name="Gygi S.P."/>
        </authorList>
    </citation>
    <scope>PHOSPHORYLATION [LARGE SCALE ANALYSIS] AT THR-277</scope>
    <scope>IDENTIFICATION BY MASS SPECTROMETRY [LARGE SCALE ANALYSIS]</scope>
    <source>
        <strain>ADR376</strain>
    </source>
</reference>
<reference key="7">
    <citation type="journal article" date="2007" name="Proc. Natl. Acad. Sci. U.S.A.">
        <title>Analysis of phosphorylation sites on proteins from Saccharomyces cerevisiae by electron transfer dissociation (ETD) mass spectrometry.</title>
        <authorList>
            <person name="Chi A."/>
            <person name="Huttenhower C."/>
            <person name="Geer L.Y."/>
            <person name="Coon J.J."/>
            <person name="Syka J.E.P."/>
            <person name="Bai D.L."/>
            <person name="Shabanowitz J."/>
            <person name="Burke D.J."/>
            <person name="Troyanskaya O.G."/>
            <person name="Hunt D.F."/>
        </authorList>
    </citation>
    <scope>PHOSPHORYLATION [LARGE SCALE ANALYSIS] AT SER-369</scope>
    <scope>IDENTIFICATION BY MASS SPECTROMETRY [LARGE SCALE ANALYSIS]</scope>
</reference>
<reference key="8">
    <citation type="journal article" date="2008" name="Mol. Cell. Proteomics">
        <title>A multidimensional chromatography technology for in-depth phosphoproteome analysis.</title>
        <authorList>
            <person name="Albuquerque C.P."/>
            <person name="Smolka M.B."/>
            <person name="Payne S.H."/>
            <person name="Bafna V."/>
            <person name="Eng J."/>
            <person name="Zhou H."/>
        </authorList>
    </citation>
    <scope>PHOSPHORYLATION [LARGE SCALE ANALYSIS] AT THR-277</scope>
    <scope>IDENTIFICATION BY MASS SPECTROMETRY [LARGE SCALE ANALYSIS]</scope>
</reference>
<reference key="9">
    <citation type="journal article" date="2009" name="Science">
        <title>Global analysis of Cdk1 substrate phosphorylation sites provides insights into evolution.</title>
        <authorList>
            <person name="Holt L.J."/>
            <person name="Tuch B.B."/>
            <person name="Villen J."/>
            <person name="Johnson A.D."/>
            <person name="Gygi S.P."/>
            <person name="Morgan D.O."/>
        </authorList>
    </citation>
    <scope>PHOSPHORYLATION [LARGE SCALE ANALYSIS] AT THR-277</scope>
    <scope>IDENTIFICATION BY MASS SPECTROMETRY [LARGE SCALE ANALYSIS]</scope>
</reference>
<protein>
    <recommendedName>
        <fullName>Arf guanine nucleotide exchange factor SYT1</fullName>
        <shortName>Arf-GEF SYT1</shortName>
    </recommendedName>
    <alternativeName>
        <fullName>Suppressor of YPT3 protein 1</fullName>
    </alternativeName>
</protein>
<accession>Q06836</accession>
<accession>D6W494</accession>
<name>SYT1_YEAST</name>
<feature type="chain" id="PRO_0000270620" description="Arf guanine nucleotide exchange factor SYT1">
    <location>
        <begin position="1"/>
        <end position="1226"/>
    </location>
</feature>
<feature type="domain" description="SEC7" evidence="1">
    <location>
        <begin position="405"/>
        <end position="620"/>
    </location>
</feature>
<feature type="domain" description="PH">
    <location>
        <begin position="844"/>
        <end position="1074"/>
    </location>
</feature>
<feature type="region of interest" description="Disordered" evidence="2">
    <location>
        <begin position="17"/>
        <end position="39"/>
    </location>
</feature>
<feature type="region of interest" description="Disordered" evidence="2">
    <location>
        <begin position="113"/>
        <end position="158"/>
    </location>
</feature>
<feature type="region of interest" description="Disordered" evidence="2">
    <location>
        <begin position="311"/>
        <end position="405"/>
    </location>
</feature>
<feature type="region of interest" description="Disordered" evidence="2">
    <location>
        <begin position="954"/>
        <end position="1022"/>
    </location>
</feature>
<feature type="region of interest" description="Disordered" evidence="2">
    <location>
        <begin position="1178"/>
        <end position="1198"/>
    </location>
</feature>
<feature type="compositionally biased region" description="Basic and acidic residues" evidence="2">
    <location>
        <begin position="131"/>
        <end position="142"/>
    </location>
</feature>
<feature type="compositionally biased region" description="Polar residues" evidence="2">
    <location>
        <begin position="349"/>
        <end position="360"/>
    </location>
</feature>
<feature type="compositionally biased region" description="Polar residues" evidence="2">
    <location>
        <begin position="386"/>
        <end position="405"/>
    </location>
</feature>
<feature type="compositionally biased region" description="Low complexity" evidence="2">
    <location>
        <begin position="956"/>
        <end position="969"/>
    </location>
</feature>
<feature type="compositionally biased region" description="Low complexity" evidence="2">
    <location>
        <begin position="994"/>
        <end position="1017"/>
    </location>
</feature>
<feature type="modified residue" description="Phosphothreonine" evidence="7 8 9">
    <location>
        <position position="277"/>
    </location>
</feature>
<feature type="modified residue" description="Phosphoserine" evidence="6">
    <location>
        <position position="369"/>
    </location>
</feature>
<keyword id="KW-0963">Cytoplasm</keyword>
<keyword id="KW-0344">Guanine-nucleotide releasing factor</keyword>
<keyword id="KW-0597">Phosphoprotein</keyword>
<keyword id="KW-1185">Reference proteome</keyword>
<sequence length="1226" mass="137583">MNQSISSLIKLKFLQSHSNDKNGNKKGGSNVSTGIDKLRESESYRSPFLQLAEIQEHTNNDDDKLDVKECEPTKKHSKLSRIRRKMGRLDLNFRSANEKGSEDDEILVAQHLRNGQDPEEMPFKSENNIDSIEKVPKPDGERVTLTSSGSDNVKRNSKHAPFIPVKPALEKFPSSNRLSRDYRKSQEPTLFNGDRLVPTLPTVSRISTSSSVGSSTAASRYFNPSKRAVVASSSSSSSSIKFNSLHAIPLDATPQIELAKQQDEISKRRFGRRRSRTVDVFDYINKNNTAKNKPPLSPSSFIRTIDEKNTNSLMQDPMGSRGPLLPDDANIISNDTDGAEASHPDHQVLSRSRSQSTSFVQGKGGKRKSIEDEGYHNKLGLPHGSGPTSVYNNKSNANSTITGMSRRSSSIVNALSSFVNLRSSSLSSSRQQHLQQQQQLQQKLDVSLEDLPPVPAPEFSDSCKDFLIKLAPYGKFIGIILTEKDDEFKKNCLNYLLTNCFEFKNDPLDIALRKLLMFLELPKETQQIDRLIMAFSFAYYKAQKSYSKKKGIECPWSNADQVYFIAFSLLMLHTDYFNPNNKSKMTKHDFVDLVHNDKYSGGNEIPMAVLTYFYENVTAKESPKFNYFLMSPMALDDSILDKDAFDTNFAITLSSNSMYSPIDMIKRGSIIPKEASLSPIFYPLTNSISASGIAPSTAASCPPSTSGTINGANLGTANSNSNRPASNSISSYFSYNPSSSSSGNATLVQDDINVYSHIINDTLNEVNLFPEVSKYWNKNALKANLLRNEEHKYEKYYSIMNDTKGGYLRFHKSQLNKLNLPNFEILNDNSRSGCKNSDYKYCKILQMGAIMNLGMPSRKFSIVNSAKIHWKKEFAILTSLGLLICDKMDWINPQMMKDPKSGTTNYIIDFKSGFSFVPGSTIDVYNGLFADRERDSLGKSHFASLVLAYTEHHSTGSHTSNTTAASSSAKHNEGVFEPSSDEEDSITNSTDGTSSVSNGESDNDSVSSSDNQLSSNDSNEDYHSIKDEYPIFEDENADCLLYLHTCHRNFIWKCANKYERDNWIDSINLFSAYDGCYVEIGSIANTICNKRKLTILQRMERLRSIKSAKWEKLKKFESTLMLMGKCVPISTKTKTDMINRIRQLAVRMDWLIYEIKRSELFVSIIKEVTRKQAEKNILEHGKGEEEGQGNNDDSDGIDDIEESFLFNENSLQVCVSDSSYDEYSNE</sequence>
<evidence type="ECO:0000255" key="1">
    <source>
        <dbReference type="PROSITE-ProRule" id="PRU00189"/>
    </source>
</evidence>
<evidence type="ECO:0000256" key="2">
    <source>
        <dbReference type="SAM" id="MobiDB-lite"/>
    </source>
</evidence>
<evidence type="ECO:0000269" key="3">
    <source>
    </source>
</evidence>
<evidence type="ECO:0000269" key="4">
    <source>
    </source>
</evidence>
<evidence type="ECO:0000269" key="5">
    <source>
    </source>
</evidence>
<evidence type="ECO:0007744" key="6">
    <source>
    </source>
</evidence>
<evidence type="ECO:0007744" key="7">
    <source>
    </source>
</evidence>
<evidence type="ECO:0007744" key="8">
    <source>
    </source>
</evidence>
<evidence type="ECO:0007744" key="9">
    <source>
    </source>
</evidence>